<name>RS19_BUCBP</name>
<sequence>MPRSLKKGPFIDIALLRKVEQAVEIRDKKPIRTWSRRSTIFPKMVGLTMLIHNGRQHIPVFITEDMVGHKLGEFVLTRTYRGHTADKKVKKR</sequence>
<gene>
    <name evidence="1" type="primary">rpsS</name>
    <name type="ordered locus">bbp_463</name>
</gene>
<keyword id="KW-1185">Reference proteome</keyword>
<keyword id="KW-0687">Ribonucleoprotein</keyword>
<keyword id="KW-0689">Ribosomal protein</keyword>
<keyword id="KW-0694">RNA-binding</keyword>
<keyword id="KW-0699">rRNA-binding</keyword>
<comment type="function">
    <text evidence="1">Protein S19 forms a complex with S13 that binds strongly to the 16S ribosomal RNA.</text>
</comment>
<comment type="similarity">
    <text evidence="1">Belongs to the universal ribosomal protein uS19 family.</text>
</comment>
<organism>
    <name type="scientific">Buchnera aphidicola subsp. Baizongia pistaciae (strain Bp)</name>
    <dbReference type="NCBI Taxonomy" id="224915"/>
    <lineage>
        <taxon>Bacteria</taxon>
        <taxon>Pseudomonadati</taxon>
        <taxon>Pseudomonadota</taxon>
        <taxon>Gammaproteobacteria</taxon>
        <taxon>Enterobacterales</taxon>
        <taxon>Erwiniaceae</taxon>
        <taxon>Buchnera</taxon>
    </lineage>
</organism>
<dbReference type="EMBL" id="AE016826">
    <property type="protein sequence ID" value="AAO27169.1"/>
    <property type="molecule type" value="Genomic_DNA"/>
</dbReference>
<dbReference type="RefSeq" id="WP_011091570.1">
    <property type="nucleotide sequence ID" value="NC_004545.1"/>
</dbReference>
<dbReference type="SMR" id="Q89A72"/>
<dbReference type="STRING" id="224915.bbp_463"/>
<dbReference type="KEGG" id="bab:bbp_463"/>
<dbReference type="eggNOG" id="COG0185">
    <property type="taxonomic scope" value="Bacteria"/>
</dbReference>
<dbReference type="HOGENOM" id="CLU_144911_0_1_6"/>
<dbReference type="OrthoDB" id="9797833at2"/>
<dbReference type="Proteomes" id="UP000000601">
    <property type="component" value="Chromosome"/>
</dbReference>
<dbReference type="GO" id="GO:0005737">
    <property type="term" value="C:cytoplasm"/>
    <property type="evidence" value="ECO:0007669"/>
    <property type="project" value="UniProtKB-ARBA"/>
</dbReference>
<dbReference type="GO" id="GO:0015935">
    <property type="term" value="C:small ribosomal subunit"/>
    <property type="evidence" value="ECO:0007669"/>
    <property type="project" value="InterPro"/>
</dbReference>
<dbReference type="GO" id="GO:0019843">
    <property type="term" value="F:rRNA binding"/>
    <property type="evidence" value="ECO:0007669"/>
    <property type="project" value="UniProtKB-UniRule"/>
</dbReference>
<dbReference type="GO" id="GO:0003735">
    <property type="term" value="F:structural constituent of ribosome"/>
    <property type="evidence" value="ECO:0007669"/>
    <property type="project" value="InterPro"/>
</dbReference>
<dbReference type="GO" id="GO:0000028">
    <property type="term" value="P:ribosomal small subunit assembly"/>
    <property type="evidence" value="ECO:0007669"/>
    <property type="project" value="TreeGrafter"/>
</dbReference>
<dbReference type="GO" id="GO:0006412">
    <property type="term" value="P:translation"/>
    <property type="evidence" value="ECO:0007669"/>
    <property type="project" value="UniProtKB-UniRule"/>
</dbReference>
<dbReference type="FunFam" id="3.30.860.10:FF:000001">
    <property type="entry name" value="30S ribosomal protein S19"/>
    <property type="match status" value="1"/>
</dbReference>
<dbReference type="Gene3D" id="3.30.860.10">
    <property type="entry name" value="30s Ribosomal Protein S19, Chain A"/>
    <property type="match status" value="1"/>
</dbReference>
<dbReference type="HAMAP" id="MF_00531">
    <property type="entry name" value="Ribosomal_uS19"/>
    <property type="match status" value="1"/>
</dbReference>
<dbReference type="InterPro" id="IPR002222">
    <property type="entry name" value="Ribosomal_uS19"/>
</dbReference>
<dbReference type="InterPro" id="IPR005732">
    <property type="entry name" value="Ribosomal_uS19_bac-type"/>
</dbReference>
<dbReference type="InterPro" id="IPR020934">
    <property type="entry name" value="Ribosomal_uS19_CS"/>
</dbReference>
<dbReference type="InterPro" id="IPR023575">
    <property type="entry name" value="Ribosomal_uS19_SF"/>
</dbReference>
<dbReference type="NCBIfam" id="TIGR01050">
    <property type="entry name" value="rpsS_bact"/>
    <property type="match status" value="1"/>
</dbReference>
<dbReference type="PANTHER" id="PTHR11880">
    <property type="entry name" value="RIBOSOMAL PROTEIN S19P FAMILY MEMBER"/>
    <property type="match status" value="1"/>
</dbReference>
<dbReference type="PANTHER" id="PTHR11880:SF8">
    <property type="entry name" value="SMALL RIBOSOMAL SUBUNIT PROTEIN US19M"/>
    <property type="match status" value="1"/>
</dbReference>
<dbReference type="Pfam" id="PF00203">
    <property type="entry name" value="Ribosomal_S19"/>
    <property type="match status" value="1"/>
</dbReference>
<dbReference type="PIRSF" id="PIRSF002144">
    <property type="entry name" value="Ribosomal_S19"/>
    <property type="match status" value="1"/>
</dbReference>
<dbReference type="PRINTS" id="PR00975">
    <property type="entry name" value="RIBOSOMALS19"/>
</dbReference>
<dbReference type="SUPFAM" id="SSF54570">
    <property type="entry name" value="Ribosomal protein S19"/>
    <property type="match status" value="1"/>
</dbReference>
<dbReference type="PROSITE" id="PS00323">
    <property type="entry name" value="RIBOSOMAL_S19"/>
    <property type="match status" value="1"/>
</dbReference>
<evidence type="ECO:0000255" key="1">
    <source>
        <dbReference type="HAMAP-Rule" id="MF_00531"/>
    </source>
</evidence>
<evidence type="ECO:0000305" key="2"/>
<protein>
    <recommendedName>
        <fullName evidence="1">Small ribosomal subunit protein uS19</fullName>
    </recommendedName>
    <alternativeName>
        <fullName evidence="2">30S ribosomal protein S19</fullName>
    </alternativeName>
</protein>
<reference key="1">
    <citation type="journal article" date="2003" name="Proc. Natl. Acad. Sci. U.S.A.">
        <title>Reductive genome evolution in Buchnera aphidicola.</title>
        <authorList>
            <person name="van Ham R.C.H.J."/>
            <person name="Kamerbeek J."/>
            <person name="Palacios C."/>
            <person name="Rausell C."/>
            <person name="Abascal F."/>
            <person name="Bastolla U."/>
            <person name="Fernandez J.M."/>
            <person name="Jimenez L."/>
            <person name="Postigo M."/>
            <person name="Silva F.J."/>
            <person name="Tamames J."/>
            <person name="Viguera E."/>
            <person name="Latorre A."/>
            <person name="Valencia A."/>
            <person name="Moran F."/>
            <person name="Moya A."/>
        </authorList>
    </citation>
    <scope>NUCLEOTIDE SEQUENCE [LARGE SCALE GENOMIC DNA]</scope>
    <source>
        <strain>Bp</strain>
    </source>
</reference>
<accession>Q89A72</accession>
<proteinExistence type="inferred from homology"/>
<feature type="chain" id="PRO_0000129796" description="Small ribosomal subunit protein uS19">
    <location>
        <begin position="1"/>
        <end position="92"/>
    </location>
</feature>